<comment type="function">
    <text evidence="5">In muscle, parvalbumin is thought to be involved in relaxation after contraction. It binds two calcium ions.</text>
</comment>
<comment type="mass spectrometry" mass="11781.0" method="MALDI" evidence="5"/>
<comment type="allergen">
    <text evidence="5">Causes an allergic reaction in human.</text>
</comment>
<comment type="similarity">
    <text evidence="3">Belongs to the parvalbumin family.</text>
</comment>
<accession>P86431</accession>
<proteinExistence type="evidence at protein level"/>
<organism>
    <name type="scientific">Oncorhynchus mykiss</name>
    <name type="common">Rainbow trout</name>
    <name type="synonym">Salmo gairdneri</name>
    <dbReference type="NCBI Taxonomy" id="8022"/>
    <lineage>
        <taxon>Eukaryota</taxon>
        <taxon>Metazoa</taxon>
        <taxon>Chordata</taxon>
        <taxon>Craniata</taxon>
        <taxon>Vertebrata</taxon>
        <taxon>Euteleostomi</taxon>
        <taxon>Actinopterygii</taxon>
        <taxon>Neopterygii</taxon>
        <taxon>Teleostei</taxon>
        <taxon>Protacanthopterygii</taxon>
        <taxon>Salmoniformes</taxon>
        <taxon>Salmonidae</taxon>
        <taxon>Salmoninae</taxon>
        <taxon>Oncorhynchus</taxon>
    </lineage>
</organism>
<feature type="chain" id="PRO_0000391421" description="Parvalbumin beta 1">
    <location>
        <begin position="1"/>
        <end position="108"/>
    </location>
</feature>
<feature type="domain" description="EF-hand 1" evidence="4">
    <location>
        <begin position="38"/>
        <end position="73"/>
    </location>
</feature>
<feature type="domain" description="EF-hand 2" evidence="4">
    <location>
        <begin position="77"/>
        <end position="108"/>
    </location>
</feature>
<feature type="binding site" evidence="1 4">
    <location>
        <position position="51"/>
    </location>
    <ligand>
        <name>Ca(2+)</name>
        <dbReference type="ChEBI" id="CHEBI:29108"/>
        <label>1</label>
    </ligand>
</feature>
<feature type="binding site" evidence="1 4">
    <location>
        <position position="53"/>
    </location>
    <ligand>
        <name>Ca(2+)</name>
        <dbReference type="ChEBI" id="CHEBI:29108"/>
        <label>1</label>
    </ligand>
</feature>
<feature type="binding site" evidence="1 4">
    <location>
        <position position="55"/>
    </location>
    <ligand>
        <name>Ca(2+)</name>
        <dbReference type="ChEBI" id="CHEBI:29108"/>
        <label>1</label>
    </ligand>
</feature>
<feature type="binding site" evidence="1">
    <location>
        <position position="57"/>
    </location>
    <ligand>
        <name>Ca(2+)</name>
        <dbReference type="ChEBI" id="CHEBI:29108"/>
        <label>1</label>
    </ligand>
</feature>
<feature type="binding site" evidence="1">
    <location>
        <position position="59"/>
    </location>
    <ligand>
        <name>Ca(2+)</name>
        <dbReference type="ChEBI" id="CHEBI:29108"/>
        <label>1</label>
    </ligand>
</feature>
<feature type="binding site" evidence="1 4">
    <location>
        <position position="62"/>
    </location>
    <ligand>
        <name>Ca(2+)</name>
        <dbReference type="ChEBI" id="CHEBI:29108"/>
        <label>1</label>
    </ligand>
</feature>
<feature type="binding site" evidence="1 4">
    <location>
        <position position="90"/>
    </location>
    <ligand>
        <name>Ca(2+)</name>
        <dbReference type="ChEBI" id="CHEBI:29108"/>
        <label>2</label>
    </ligand>
</feature>
<feature type="binding site" evidence="1 4">
    <location>
        <position position="92"/>
    </location>
    <ligand>
        <name>Ca(2+)</name>
        <dbReference type="ChEBI" id="CHEBI:29108"/>
        <label>2</label>
    </ligand>
</feature>
<feature type="binding site" evidence="1 4">
    <location>
        <position position="94"/>
    </location>
    <ligand>
        <name>Ca(2+)</name>
        <dbReference type="ChEBI" id="CHEBI:29108"/>
        <label>2</label>
    </ligand>
</feature>
<feature type="binding site" evidence="4">
    <location>
        <position position="96"/>
    </location>
    <ligand>
        <name>Ca(2+)</name>
        <dbReference type="ChEBI" id="CHEBI:29108"/>
        <label>2</label>
    </ligand>
</feature>
<feature type="binding site" evidence="1 4">
    <location>
        <position position="101"/>
    </location>
    <ligand>
        <name>Ca(2+)</name>
        <dbReference type="ChEBI" id="CHEBI:29108"/>
        <label>2</label>
    </ligand>
</feature>
<feature type="modified residue" description="N-acetylalanine" evidence="5">
    <location>
        <position position="1"/>
    </location>
</feature>
<feature type="unsure residue" description="L or I" evidence="5">
    <location>
        <position position="5"/>
    </location>
</feature>
<feature type="unsure residue" description="L or I" evidence="5">
    <location>
        <position position="11"/>
    </location>
</feature>
<feature type="unsure residue" description="L or I" evidence="5">
    <location>
        <position position="15"/>
    </location>
</feature>
<feature type="unsure residue" description="L or I" evidence="5">
    <location>
        <position position="33"/>
    </location>
</feature>
<feature type="unsure residue" description="L or I" evidence="5">
    <location>
        <position position="50"/>
    </location>
</feature>
<feature type="unsure residue" description="L or I" evidence="5">
    <location>
        <position position="58"/>
    </location>
</feature>
<feature type="unsure residue" description="L or I" evidence="5">
    <location>
        <position position="63"/>
    </location>
</feature>
<feature type="unsure residue" description="L or I" evidence="5">
    <location>
        <position position="65"/>
    </location>
</feature>
<feature type="unsure residue" description="L or I" evidence="5">
    <location>
        <position position="67"/>
    </location>
</feature>
<feature type="unsure residue" description="L or I" evidence="5">
    <location>
        <position position="77"/>
    </location>
</feature>
<feature type="unsure residue" description="L or I" evidence="5">
    <location>
        <position position="86"/>
    </location>
</feature>
<feature type="unsure residue" description="L or I" evidence="5">
    <location>
        <position position="97"/>
    </location>
</feature>
<feature type="unsure residue" description="L or I" evidence="5">
    <location>
        <position position="99"/>
    </location>
</feature>
<feature type="unsure residue" description="L or I" evidence="5">
    <location>
        <position position="105"/>
    </location>
</feature>
<name>PRVB1_ONCMY</name>
<evidence type="ECO:0000250" key="1">
    <source>
        <dbReference type="UniProtKB" id="P02621"/>
    </source>
</evidence>
<evidence type="ECO:0000250" key="2">
    <source>
        <dbReference type="UniProtKB" id="Q91482"/>
    </source>
</evidence>
<evidence type="ECO:0000255" key="3"/>
<evidence type="ECO:0000255" key="4">
    <source>
        <dbReference type="PROSITE-ProRule" id="PRU00448"/>
    </source>
</evidence>
<evidence type="ECO:0000269" key="5">
    <source ref="1"/>
</evidence>
<evidence type="ECO:0000303" key="6">
    <source ref="1"/>
</evidence>
<evidence type="ECO:0000305" key="7"/>
<keyword id="KW-0007">Acetylation</keyword>
<keyword id="KW-0020">Allergen</keyword>
<keyword id="KW-0106">Calcium</keyword>
<keyword id="KW-0903">Direct protein sequencing</keyword>
<keyword id="KW-0479">Metal-binding</keyword>
<keyword id="KW-0514">Muscle protein</keyword>
<keyword id="KW-0677">Repeat</keyword>
<reference evidence="7" key="1">
    <citation type="submission" date="2009-12" db="UniProtKB">
        <title>Detection of parvalbumins in fish protein extracts and fish containing products with scFv-antibodies.</title>
        <authorList>
            <person name="Kostadinova M."/>
            <person name="Bublin M."/>
            <person name="Radauer C."/>
            <person name="Briza P."/>
            <person name="Breiteneder H."/>
        </authorList>
    </citation>
    <scope>PROTEIN SEQUENCE</scope>
    <scope>FUNCTION</scope>
    <scope>MASS SPECTROMETRY</scope>
    <scope>ALLERGEN</scope>
    <scope>ACETYLATION AT ALA-1</scope>
    <source>
        <tissue evidence="5">Muscle</tissue>
    </source>
</reference>
<protein>
    <recommendedName>
        <fullName evidence="2 6">Parvalbumin beta 1</fullName>
    </recommendedName>
</protein>
<dbReference type="Allergome" id="8150">
    <property type="allergen name" value="Onc m 1"/>
</dbReference>
<dbReference type="Allergome" id="9514">
    <property type="allergen name" value="Onc m 1.0101"/>
</dbReference>
<dbReference type="Proteomes" id="UP000694395">
    <property type="component" value="Unplaced"/>
</dbReference>
<dbReference type="GO" id="GO:0016528">
    <property type="term" value="C:sarcoplasm"/>
    <property type="evidence" value="ECO:0000314"/>
    <property type="project" value="AgBase"/>
</dbReference>
<dbReference type="GO" id="GO:0005509">
    <property type="term" value="F:calcium ion binding"/>
    <property type="evidence" value="ECO:0000314"/>
    <property type="project" value="AgBase"/>
</dbReference>
<dbReference type="FunFam" id="1.10.238.10:FF:000060">
    <property type="entry name" value="Parvalbumin, thymic"/>
    <property type="match status" value="1"/>
</dbReference>
<dbReference type="Gene3D" id="1.10.238.10">
    <property type="entry name" value="EF-hand"/>
    <property type="match status" value="1"/>
</dbReference>
<dbReference type="InterPro" id="IPR011992">
    <property type="entry name" value="EF-hand-dom_pair"/>
</dbReference>
<dbReference type="InterPro" id="IPR018247">
    <property type="entry name" value="EF_Hand_1_Ca_BS"/>
</dbReference>
<dbReference type="InterPro" id="IPR002048">
    <property type="entry name" value="EF_hand_dom"/>
</dbReference>
<dbReference type="InterPro" id="IPR008080">
    <property type="entry name" value="Parvalbumin"/>
</dbReference>
<dbReference type="PANTHER" id="PTHR11653:SF12">
    <property type="entry name" value="PARVALBUMIN"/>
    <property type="match status" value="1"/>
</dbReference>
<dbReference type="PANTHER" id="PTHR11653">
    <property type="entry name" value="PARVALBUMIN ALPHA"/>
    <property type="match status" value="1"/>
</dbReference>
<dbReference type="Pfam" id="PF13499">
    <property type="entry name" value="EF-hand_7"/>
    <property type="match status" value="1"/>
</dbReference>
<dbReference type="PRINTS" id="PR01697">
    <property type="entry name" value="PARVALBUMIN"/>
</dbReference>
<dbReference type="SUPFAM" id="SSF47473">
    <property type="entry name" value="EF-hand"/>
    <property type="match status" value="1"/>
</dbReference>
<dbReference type="PROSITE" id="PS00018">
    <property type="entry name" value="EF_HAND_1"/>
    <property type="match status" value="2"/>
</dbReference>
<dbReference type="PROSITE" id="PS50222">
    <property type="entry name" value="EF_HAND_2"/>
    <property type="match status" value="2"/>
</dbReference>
<sequence length="108" mass="11800">ACAHLCKEADLKTALEACKAADSFNFKTFFHTLGFASKXXDDVKKXXXVLDQDASGFLEVEELKLFLQNFCPKXXXLTDAETKAFLKAGDADGDGMLGLDEFAVLVKQ</sequence>